<protein>
    <recommendedName>
        <fullName evidence="1">4,4'-diapophytoene desaturase (4,4'-diaponeurosporene-forming)</fullName>
        <ecNumber evidence="1">1.3.8.-</ecNumber>
    </recommendedName>
    <alternativeName>
        <fullName evidence="1">Dehydrosqualene desaturase</fullName>
    </alternativeName>
</protein>
<name>CRTN_STAA3</name>
<comment type="function">
    <text evidence="1">Involved in the biosynthesis of the yellow-orange carotenoid staphyloxanthin, which plays a role in the virulence via its protective function against oxidative stress. Catalyzes three successive dehydrogenation reactions that lead to the introduction of three double bonds into 4,4'-diapophytoene (dehydrosqualene), with 4,4'-diapophytofluene and 4,4'-diapo-zeta-carotene as intermediates, and 4,4'-diaponeurosporene (the major deep-yellow pigment in staphylococci strains) as the end product.</text>
</comment>
<comment type="catalytic activity">
    <reaction evidence="1">
        <text>15-cis-4,4'-diapophytoene + 3 FAD + 3 H(+) = all-trans-4,4'-diaponeurosporene + 3 FADH2</text>
        <dbReference type="Rhea" id="RHEA:42800"/>
        <dbReference type="ChEBI" id="CHEBI:15378"/>
        <dbReference type="ChEBI" id="CHEBI:57692"/>
        <dbReference type="ChEBI" id="CHEBI:58307"/>
        <dbReference type="ChEBI" id="CHEBI:62738"/>
        <dbReference type="ChEBI" id="CHEBI:62743"/>
    </reaction>
</comment>
<comment type="pathway">
    <text evidence="1">Carotenoid biosynthesis; staphyloxanthin biosynthesis; staphyloxanthin from farnesyl diphosphate: step 2/5.</text>
</comment>
<comment type="similarity">
    <text evidence="3">Belongs to the carotenoid/retinoid oxidoreductase family. CrtN subfamily.</text>
</comment>
<sequence>MKIAVIGAGVTGLAAAARIASQGHEVTIFEKNNNVGGRMNQLKKDGFTFDMGPTIVMMPDVYKDVFTACGKNYEDYIELRQLRYIYDVYFDHDDRITVPTDLAELQQMLESIEPGSTHGFMSFLTDVYKKYEIARRYFLERTYRKPSDFYNMTSLVQGAKLKTLNHADQLIEHYIDNEKIQKLLAFQTLYIGIDPKRGPSLYSIIPMIEMMFGVHFIKGGMYGMAQGLAQLNKDLGVNIELNAEIEQIIIDPKFKRADAIKVNGDIRKFDKILCTADFPSVAESLMPDFAPIKKYPPHKIADLDYSCSAFLMYIGIDIDVTDQVRLHNVIFSDDFRGNIEEIFEGRLSYDPSIYVYVPAVADKSLAPEGKTGIYVLMPTPELKTGSGIDWSDEALTQQIKEIIYRKLATIEVFEDIKSHIVSETIFTPNDFEQTYHAKFGSAFGLMPTLAQSNYYRPQNVSRDYKDLYFAGASTHPGAGVPIVLTSAKITVDEMIKDIERGV</sequence>
<dbReference type="EC" id="1.3.8.-" evidence="1"/>
<dbReference type="EMBL" id="CP000255">
    <property type="protein sequence ID" value="ABD20881.1"/>
    <property type="molecule type" value="Genomic_DNA"/>
</dbReference>
<dbReference type="RefSeq" id="WP_000686168.1">
    <property type="nucleotide sequence ID" value="NZ_CP027476.1"/>
</dbReference>
<dbReference type="SMR" id="Q2FDU6"/>
<dbReference type="ChEMBL" id="CHEMBL4105865"/>
<dbReference type="KEGG" id="saa:SAUSA300_2498"/>
<dbReference type="HOGENOM" id="CLU_019722_2_1_9"/>
<dbReference type="OMA" id="CWSVMPA"/>
<dbReference type="UniPathway" id="UPA00029">
    <property type="reaction ID" value="UER00557"/>
</dbReference>
<dbReference type="Proteomes" id="UP000001939">
    <property type="component" value="Chromosome"/>
</dbReference>
<dbReference type="GO" id="GO:0102223">
    <property type="term" value="F:4,4'-diapophytoene desaturase (4,4'-diaponeurosporene-forming)"/>
    <property type="evidence" value="ECO:0007669"/>
    <property type="project" value="RHEA"/>
</dbReference>
<dbReference type="GO" id="GO:0016117">
    <property type="term" value="P:carotenoid biosynthetic process"/>
    <property type="evidence" value="ECO:0007669"/>
    <property type="project" value="UniProtKB-KW"/>
</dbReference>
<dbReference type="Gene3D" id="3.50.50.60">
    <property type="entry name" value="FAD/NAD(P)-binding domain"/>
    <property type="match status" value="2"/>
</dbReference>
<dbReference type="InterPro" id="IPR002937">
    <property type="entry name" value="Amino_oxidase"/>
</dbReference>
<dbReference type="InterPro" id="IPR014105">
    <property type="entry name" value="Carotenoid/retinoid_OxRdtase"/>
</dbReference>
<dbReference type="InterPro" id="IPR036188">
    <property type="entry name" value="FAD/NAD-bd_sf"/>
</dbReference>
<dbReference type="NCBIfam" id="TIGR02734">
    <property type="entry name" value="crtI_fam"/>
    <property type="match status" value="1"/>
</dbReference>
<dbReference type="PANTHER" id="PTHR43734">
    <property type="entry name" value="PHYTOENE DESATURASE"/>
    <property type="match status" value="1"/>
</dbReference>
<dbReference type="PANTHER" id="PTHR43734:SF1">
    <property type="entry name" value="PHYTOENE DESATURASE"/>
    <property type="match status" value="1"/>
</dbReference>
<dbReference type="Pfam" id="PF01593">
    <property type="entry name" value="Amino_oxidase"/>
    <property type="match status" value="1"/>
</dbReference>
<dbReference type="PRINTS" id="PR00419">
    <property type="entry name" value="ADXRDTASE"/>
</dbReference>
<dbReference type="SUPFAM" id="SSF51905">
    <property type="entry name" value="FAD/NAD(P)-binding domain"/>
    <property type="match status" value="1"/>
</dbReference>
<feature type="chain" id="PRO_0000272190" description="4,4'-diapophytoene desaturase (4,4'-diaponeurosporene-forming)">
    <location>
        <begin position="1"/>
        <end position="502"/>
    </location>
</feature>
<feature type="binding site" evidence="2">
    <location>
        <begin position="5"/>
        <end position="17"/>
    </location>
    <ligand>
        <name>FAD</name>
        <dbReference type="ChEBI" id="CHEBI:57692"/>
    </ligand>
</feature>
<evidence type="ECO:0000250" key="1">
    <source>
        <dbReference type="UniProtKB" id="O07855"/>
    </source>
</evidence>
<evidence type="ECO:0000255" key="2"/>
<evidence type="ECO:0000305" key="3"/>
<organism>
    <name type="scientific">Staphylococcus aureus (strain USA300)</name>
    <dbReference type="NCBI Taxonomy" id="367830"/>
    <lineage>
        <taxon>Bacteria</taxon>
        <taxon>Bacillati</taxon>
        <taxon>Bacillota</taxon>
        <taxon>Bacilli</taxon>
        <taxon>Bacillales</taxon>
        <taxon>Staphylococcaceae</taxon>
        <taxon>Staphylococcus</taxon>
    </lineage>
</organism>
<reference key="1">
    <citation type="journal article" date="2006" name="Lancet">
        <title>Complete genome sequence of USA300, an epidemic clone of community-acquired meticillin-resistant Staphylococcus aureus.</title>
        <authorList>
            <person name="Diep B.A."/>
            <person name="Gill S.R."/>
            <person name="Chang R.F."/>
            <person name="Phan T.H."/>
            <person name="Chen J.H."/>
            <person name="Davidson M.G."/>
            <person name="Lin F."/>
            <person name="Lin J."/>
            <person name="Carleton H.A."/>
            <person name="Mongodin E.F."/>
            <person name="Sensabaugh G.F."/>
            <person name="Perdreau-Remington F."/>
        </authorList>
    </citation>
    <scope>NUCLEOTIDE SEQUENCE [LARGE SCALE GENOMIC DNA]</scope>
    <source>
        <strain>USA300</strain>
    </source>
</reference>
<gene>
    <name evidence="1" type="primary">crtN</name>
    <name type="ordered locus">SAUSA300_2498</name>
</gene>
<accession>Q2FDU6</accession>
<keyword id="KW-0125">Carotenoid biosynthesis</keyword>
<keyword id="KW-0274">FAD</keyword>
<keyword id="KW-0285">Flavoprotein</keyword>
<keyword id="KW-0560">Oxidoreductase</keyword>
<keyword id="KW-0843">Virulence</keyword>
<proteinExistence type="inferred from homology"/>